<comment type="function">
    <text evidence="1">GTPase that plays an essential role in the late steps of ribosome biogenesis.</text>
</comment>
<comment type="subunit">
    <text evidence="1">Associates with the 50S ribosomal subunit.</text>
</comment>
<comment type="similarity">
    <text evidence="1">Belongs to the TRAFAC class TrmE-Era-EngA-EngB-Septin-like GTPase superfamily. EngA (Der) GTPase family.</text>
</comment>
<reference key="1">
    <citation type="submission" date="2006-05" db="EMBL/GenBank/DDBJ databases">
        <authorList>
            <consortium name="Genoscope"/>
        </authorList>
    </citation>
    <scope>NUCLEOTIDE SEQUENCE [LARGE SCALE GENOMIC DNA]</scope>
    <source>
        <strain>RCC307</strain>
    </source>
</reference>
<evidence type="ECO:0000255" key="1">
    <source>
        <dbReference type="HAMAP-Rule" id="MF_00195"/>
    </source>
</evidence>
<dbReference type="EMBL" id="CT978603">
    <property type="protein sequence ID" value="CAK27369.1"/>
    <property type="molecule type" value="Genomic_DNA"/>
</dbReference>
<dbReference type="SMR" id="A5GR60"/>
<dbReference type="STRING" id="316278.SynRCC307_0466"/>
<dbReference type="KEGG" id="syr:SynRCC307_0466"/>
<dbReference type="eggNOG" id="COG1160">
    <property type="taxonomic scope" value="Bacteria"/>
</dbReference>
<dbReference type="HOGENOM" id="CLU_016077_6_2_3"/>
<dbReference type="OrthoDB" id="9805918at2"/>
<dbReference type="Proteomes" id="UP000001115">
    <property type="component" value="Chromosome"/>
</dbReference>
<dbReference type="GO" id="GO:0005525">
    <property type="term" value="F:GTP binding"/>
    <property type="evidence" value="ECO:0007669"/>
    <property type="project" value="UniProtKB-UniRule"/>
</dbReference>
<dbReference type="GO" id="GO:0043022">
    <property type="term" value="F:ribosome binding"/>
    <property type="evidence" value="ECO:0007669"/>
    <property type="project" value="TreeGrafter"/>
</dbReference>
<dbReference type="GO" id="GO:0042254">
    <property type="term" value="P:ribosome biogenesis"/>
    <property type="evidence" value="ECO:0007669"/>
    <property type="project" value="UniProtKB-KW"/>
</dbReference>
<dbReference type="CDD" id="cd01894">
    <property type="entry name" value="EngA1"/>
    <property type="match status" value="1"/>
</dbReference>
<dbReference type="CDD" id="cd01895">
    <property type="entry name" value="EngA2"/>
    <property type="match status" value="1"/>
</dbReference>
<dbReference type="FunFam" id="3.30.300.20:FF:000004">
    <property type="entry name" value="GTPase Der"/>
    <property type="match status" value="1"/>
</dbReference>
<dbReference type="FunFam" id="3.40.50.300:FF:000040">
    <property type="entry name" value="GTPase Der"/>
    <property type="match status" value="1"/>
</dbReference>
<dbReference type="FunFam" id="3.40.50.300:FF:000057">
    <property type="entry name" value="GTPase Der"/>
    <property type="match status" value="1"/>
</dbReference>
<dbReference type="Gene3D" id="3.30.300.20">
    <property type="match status" value="1"/>
</dbReference>
<dbReference type="Gene3D" id="3.40.50.300">
    <property type="entry name" value="P-loop containing nucleotide triphosphate hydrolases"/>
    <property type="match status" value="2"/>
</dbReference>
<dbReference type="HAMAP" id="MF_00195">
    <property type="entry name" value="GTPase_Der"/>
    <property type="match status" value="1"/>
</dbReference>
<dbReference type="InterPro" id="IPR031166">
    <property type="entry name" value="G_ENGA"/>
</dbReference>
<dbReference type="InterPro" id="IPR006073">
    <property type="entry name" value="GTP-bd"/>
</dbReference>
<dbReference type="InterPro" id="IPR016484">
    <property type="entry name" value="GTPase_Der"/>
</dbReference>
<dbReference type="InterPro" id="IPR032859">
    <property type="entry name" value="KH_dom-like"/>
</dbReference>
<dbReference type="InterPro" id="IPR015946">
    <property type="entry name" value="KH_dom-like_a/b"/>
</dbReference>
<dbReference type="InterPro" id="IPR027417">
    <property type="entry name" value="P-loop_NTPase"/>
</dbReference>
<dbReference type="InterPro" id="IPR005225">
    <property type="entry name" value="Small_GTP-bd"/>
</dbReference>
<dbReference type="NCBIfam" id="TIGR03594">
    <property type="entry name" value="GTPase_EngA"/>
    <property type="match status" value="1"/>
</dbReference>
<dbReference type="NCBIfam" id="TIGR00231">
    <property type="entry name" value="small_GTP"/>
    <property type="match status" value="2"/>
</dbReference>
<dbReference type="PANTHER" id="PTHR43834">
    <property type="entry name" value="GTPASE DER"/>
    <property type="match status" value="1"/>
</dbReference>
<dbReference type="PANTHER" id="PTHR43834:SF6">
    <property type="entry name" value="GTPASE DER"/>
    <property type="match status" value="1"/>
</dbReference>
<dbReference type="Pfam" id="PF14714">
    <property type="entry name" value="KH_dom-like"/>
    <property type="match status" value="1"/>
</dbReference>
<dbReference type="Pfam" id="PF01926">
    <property type="entry name" value="MMR_HSR1"/>
    <property type="match status" value="2"/>
</dbReference>
<dbReference type="PIRSF" id="PIRSF006485">
    <property type="entry name" value="GTP-binding_EngA"/>
    <property type="match status" value="1"/>
</dbReference>
<dbReference type="PRINTS" id="PR00449">
    <property type="entry name" value="RASTRNSFRMNG"/>
</dbReference>
<dbReference type="SUPFAM" id="SSF52540">
    <property type="entry name" value="P-loop containing nucleoside triphosphate hydrolases"/>
    <property type="match status" value="2"/>
</dbReference>
<dbReference type="PROSITE" id="PS51712">
    <property type="entry name" value="G_ENGA"/>
    <property type="match status" value="2"/>
</dbReference>
<organism>
    <name type="scientific">Synechococcus sp. (strain RCC307)</name>
    <dbReference type="NCBI Taxonomy" id="316278"/>
    <lineage>
        <taxon>Bacteria</taxon>
        <taxon>Bacillati</taxon>
        <taxon>Cyanobacteriota</taxon>
        <taxon>Cyanophyceae</taxon>
        <taxon>Synechococcales</taxon>
        <taxon>Synechococcaceae</taxon>
        <taxon>Synechococcus</taxon>
    </lineage>
</organism>
<accession>A5GR60</accession>
<proteinExistence type="inferred from homology"/>
<protein>
    <recommendedName>
        <fullName evidence="1">GTPase Der</fullName>
    </recommendedName>
    <alternativeName>
        <fullName evidence="1">GTP-binding protein EngA</fullName>
    </alternativeName>
</protein>
<keyword id="KW-0342">GTP-binding</keyword>
<keyword id="KW-0547">Nucleotide-binding</keyword>
<keyword id="KW-1185">Reference proteome</keyword>
<keyword id="KW-0677">Repeat</keyword>
<keyword id="KW-0690">Ribosome biogenesis</keyword>
<name>DER_SYNR3</name>
<feature type="chain" id="PRO_1000011770" description="GTPase Der">
    <location>
        <begin position="1"/>
        <end position="452"/>
    </location>
</feature>
<feature type="domain" description="EngA-type G 1">
    <location>
        <begin position="4"/>
        <end position="169"/>
    </location>
</feature>
<feature type="domain" description="EngA-type G 2">
    <location>
        <begin position="177"/>
        <end position="352"/>
    </location>
</feature>
<feature type="domain" description="KH-like" evidence="1">
    <location>
        <begin position="353"/>
        <end position="438"/>
    </location>
</feature>
<feature type="binding site" evidence="1">
    <location>
        <begin position="10"/>
        <end position="17"/>
    </location>
    <ligand>
        <name>GTP</name>
        <dbReference type="ChEBI" id="CHEBI:37565"/>
        <label>1</label>
    </ligand>
</feature>
<feature type="binding site" evidence="1">
    <location>
        <begin position="57"/>
        <end position="61"/>
    </location>
    <ligand>
        <name>GTP</name>
        <dbReference type="ChEBI" id="CHEBI:37565"/>
        <label>1</label>
    </ligand>
</feature>
<feature type="binding site" evidence="1">
    <location>
        <begin position="120"/>
        <end position="123"/>
    </location>
    <ligand>
        <name>GTP</name>
        <dbReference type="ChEBI" id="CHEBI:37565"/>
        <label>1</label>
    </ligand>
</feature>
<feature type="binding site" evidence="1">
    <location>
        <begin position="183"/>
        <end position="190"/>
    </location>
    <ligand>
        <name>GTP</name>
        <dbReference type="ChEBI" id="CHEBI:37565"/>
        <label>2</label>
    </ligand>
</feature>
<feature type="binding site" evidence="1">
    <location>
        <begin position="230"/>
        <end position="234"/>
    </location>
    <ligand>
        <name>GTP</name>
        <dbReference type="ChEBI" id="CHEBI:37565"/>
        <label>2</label>
    </ligand>
</feature>
<feature type="binding site" evidence="1">
    <location>
        <begin position="295"/>
        <end position="298"/>
    </location>
    <ligand>
        <name>GTP</name>
        <dbReference type="ChEBI" id="CHEBI:37565"/>
        <label>2</label>
    </ligand>
</feature>
<sequence>MALPVVAIIGRPNVGKSTLVNRLCRSRDAIVHDEPGVTRDRTYQEGFWGGRTFRVVDTGGLVFDDDSEFLPEIREQASLAMAEACVALVIVDGQQGLTAADEAIAAWLRQQKCPVLLGVNKCESPEQGLAMAAEFWALGLGEPKPISAIHGAGTGDLLDQVLDFLPPQDEEEAPEPIQMAIVGRPNVGKSSLLNTVCGENRAIVSPIRGTTRDTIDTSIEREGQSWKLLDTAGIRRRRSVNYGPEFFGINRSFKAIERSDVCVLVIDAEEGVTEQDQRLAGRIEEEGRACLVVVNKWDLVEKDSHTMPAMEKELRSKLYFLEWAPMLFISALTGQRVERIFPLAVLAVEQHRRRVTTAVVNEVLQEALSWRSPPTTRGGRQGRLYYGTQVAVRPPSFTLFVNEPKLFGDTYRRYVERQIRQGLGFEGSPVRLFWRGKQQRDAERDQARAASR</sequence>
<gene>
    <name evidence="1" type="primary">der</name>
    <name type="synonym">engA</name>
    <name type="ordered locus">SynRCC307_0466</name>
</gene>